<name>MUTL_STAAT</name>
<keyword id="KW-0227">DNA damage</keyword>
<keyword id="KW-0234">DNA repair</keyword>
<proteinExistence type="inferred from homology"/>
<comment type="function">
    <text evidence="1">This protein is involved in the repair of mismatches in DNA. It is required for dam-dependent methyl-directed DNA mismatch repair. May act as a 'molecular matchmaker', a protein that promotes the formation of a stable complex between two or more DNA-binding proteins in an ATP-dependent manner without itself being part of a final effector complex.</text>
</comment>
<comment type="similarity">
    <text evidence="1">Belongs to the DNA mismatch repair MutL/HexB family.</text>
</comment>
<organism>
    <name type="scientific">Staphylococcus aureus (strain USA300 / TCH1516)</name>
    <dbReference type="NCBI Taxonomy" id="451516"/>
    <lineage>
        <taxon>Bacteria</taxon>
        <taxon>Bacillati</taxon>
        <taxon>Bacillota</taxon>
        <taxon>Bacilli</taxon>
        <taxon>Bacillales</taxon>
        <taxon>Staphylococcaceae</taxon>
        <taxon>Staphylococcus</taxon>
    </lineage>
</organism>
<accession>A8Z1W7</accession>
<feature type="chain" id="PRO_1000076723" description="DNA mismatch repair protein MutL">
    <location>
        <begin position="1"/>
        <end position="669"/>
    </location>
</feature>
<feature type="region of interest" description="Disordered" evidence="2">
    <location>
        <begin position="356"/>
        <end position="382"/>
    </location>
</feature>
<feature type="compositionally biased region" description="Polar residues" evidence="2">
    <location>
        <begin position="361"/>
        <end position="378"/>
    </location>
</feature>
<sequence>MGKIKELQTSLANKIAAGEVVERPSSVVKELLENAIDAGATEISIEVEESGVQSIRVVDNGSGIEAEDLGLVFHRHATSKLDQDEDLFHIRTLGFRGEALASISSVAKVTLKTCTDNANGNEIYVENGEILNHKPAKAKKGTDILVESLFYNTPARLKYIKSLYTELGKITDIVNRMAMSHPDIRIALISDGKTMLSTNGSGRTNEVMAEIYGMKVARDLVHISGDTSDYHIEGFVAKPEHSRSNKHYISIFINGRYIKNFMLNKAILEGYHTLLTIGRFPICYINIEMDPILVDVNVHPTKLEVRLSKEEQLYQLIVSKIQEAFKDRILIPKNNLDYVPKKNKVLHSFEQQKIEFEQRQNTENNQEKTFSSEESNSKPFMEENQNDEIVIKEDSYNPFVTKTSESLIADDESSGYNNTREKDEDYFKKQQEILQEMDQTFDSNDGTTVQNYENKASDDYYDVNDIKGTKSKDPKRRIPYMEIVGQVHGTYIIAQNEFGMYMIDQHAAQERIKYEYFRDKIGEVTNEVQDLLIPLTFHFSKDEQLVIDQYKNELQQVGIMLEHFGGHDYIVSSYPVWFPKDEVEEIIKDMIELILEEKKVDIKKLREDVAIMMSCKKSIKANHYLQKHEMSDLIDQLREAEDPFTCPHGRPIIINFSKYELEKLFKRVM</sequence>
<evidence type="ECO:0000255" key="1">
    <source>
        <dbReference type="HAMAP-Rule" id="MF_00149"/>
    </source>
</evidence>
<evidence type="ECO:0000256" key="2">
    <source>
        <dbReference type="SAM" id="MobiDB-lite"/>
    </source>
</evidence>
<reference key="1">
    <citation type="journal article" date="2007" name="BMC Microbiol.">
        <title>Subtle genetic changes enhance virulence of methicillin resistant and sensitive Staphylococcus aureus.</title>
        <authorList>
            <person name="Highlander S.K."/>
            <person name="Hulten K.G."/>
            <person name="Qin X."/>
            <person name="Jiang H."/>
            <person name="Yerrapragada S."/>
            <person name="Mason E.O. Jr."/>
            <person name="Shang Y."/>
            <person name="Williams T.M."/>
            <person name="Fortunov R.M."/>
            <person name="Liu Y."/>
            <person name="Igboeli O."/>
            <person name="Petrosino J."/>
            <person name="Tirumalai M."/>
            <person name="Uzman A."/>
            <person name="Fox G.E."/>
            <person name="Cardenas A.M."/>
            <person name="Muzny D.M."/>
            <person name="Hemphill L."/>
            <person name="Ding Y."/>
            <person name="Dugan S."/>
            <person name="Blyth P.R."/>
            <person name="Buhay C.J."/>
            <person name="Dinh H.H."/>
            <person name="Hawes A.C."/>
            <person name="Holder M."/>
            <person name="Kovar C.L."/>
            <person name="Lee S.L."/>
            <person name="Liu W."/>
            <person name="Nazareth L.V."/>
            <person name="Wang Q."/>
            <person name="Zhou J."/>
            <person name="Kaplan S.L."/>
            <person name="Weinstock G.M."/>
        </authorList>
    </citation>
    <scope>NUCLEOTIDE SEQUENCE [LARGE SCALE GENOMIC DNA]</scope>
    <source>
        <strain>USA300 / TCH1516</strain>
    </source>
</reference>
<dbReference type="EMBL" id="CP000730">
    <property type="protein sequence ID" value="ABX29242.1"/>
    <property type="molecule type" value="Genomic_DNA"/>
</dbReference>
<dbReference type="RefSeq" id="WP_000516261.1">
    <property type="nucleotide sequence ID" value="NC_010079.1"/>
</dbReference>
<dbReference type="SMR" id="A8Z1W7"/>
<dbReference type="KEGG" id="sax:USA300HOU_1228"/>
<dbReference type="HOGENOM" id="CLU_004131_4_1_9"/>
<dbReference type="GO" id="GO:0032300">
    <property type="term" value="C:mismatch repair complex"/>
    <property type="evidence" value="ECO:0007669"/>
    <property type="project" value="InterPro"/>
</dbReference>
<dbReference type="GO" id="GO:0005524">
    <property type="term" value="F:ATP binding"/>
    <property type="evidence" value="ECO:0007669"/>
    <property type="project" value="InterPro"/>
</dbReference>
<dbReference type="GO" id="GO:0016887">
    <property type="term" value="F:ATP hydrolysis activity"/>
    <property type="evidence" value="ECO:0007669"/>
    <property type="project" value="InterPro"/>
</dbReference>
<dbReference type="GO" id="GO:0140664">
    <property type="term" value="F:ATP-dependent DNA damage sensor activity"/>
    <property type="evidence" value="ECO:0007669"/>
    <property type="project" value="InterPro"/>
</dbReference>
<dbReference type="GO" id="GO:0030983">
    <property type="term" value="F:mismatched DNA binding"/>
    <property type="evidence" value="ECO:0007669"/>
    <property type="project" value="InterPro"/>
</dbReference>
<dbReference type="GO" id="GO:0006298">
    <property type="term" value="P:mismatch repair"/>
    <property type="evidence" value="ECO:0007669"/>
    <property type="project" value="UniProtKB-UniRule"/>
</dbReference>
<dbReference type="CDD" id="cd16926">
    <property type="entry name" value="HATPase_MutL-MLH-PMS-like"/>
    <property type="match status" value="1"/>
</dbReference>
<dbReference type="CDD" id="cd00782">
    <property type="entry name" value="MutL_Trans"/>
    <property type="match status" value="1"/>
</dbReference>
<dbReference type="FunFam" id="3.30.1370.100:FF:000004">
    <property type="entry name" value="DNA mismatch repair endonuclease MutL"/>
    <property type="match status" value="1"/>
</dbReference>
<dbReference type="FunFam" id="3.30.230.10:FF:000036">
    <property type="entry name" value="DNA mismatch repair endonuclease MutL"/>
    <property type="match status" value="1"/>
</dbReference>
<dbReference type="FunFam" id="3.30.565.10:FF:000003">
    <property type="entry name" value="DNA mismatch repair endonuclease MutL"/>
    <property type="match status" value="1"/>
</dbReference>
<dbReference type="Gene3D" id="3.30.230.10">
    <property type="match status" value="1"/>
</dbReference>
<dbReference type="Gene3D" id="3.30.565.10">
    <property type="entry name" value="Histidine kinase-like ATPase, C-terminal domain"/>
    <property type="match status" value="1"/>
</dbReference>
<dbReference type="Gene3D" id="3.30.1540.20">
    <property type="entry name" value="MutL, C-terminal domain, dimerisation subdomain"/>
    <property type="match status" value="1"/>
</dbReference>
<dbReference type="Gene3D" id="3.30.1370.100">
    <property type="entry name" value="MutL, C-terminal domain, regulatory subdomain"/>
    <property type="match status" value="1"/>
</dbReference>
<dbReference type="HAMAP" id="MF_00149">
    <property type="entry name" value="DNA_mis_repair"/>
    <property type="match status" value="1"/>
</dbReference>
<dbReference type="InterPro" id="IPR014762">
    <property type="entry name" value="DNA_mismatch_repair_CS"/>
</dbReference>
<dbReference type="InterPro" id="IPR020667">
    <property type="entry name" value="DNA_mismatch_repair_MutL"/>
</dbReference>
<dbReference type="InterPro" id="IPR013507">
    <property type="entry name" value="DNA_mismatch_S5_2-like"/>
</dbReference>
<dbReference type="InterPro" id="IPR036890">
    <property type="entry name" value="HATPase_C_sf"/>
</dbReference>
<dbReference type="InterPro" id="IPR002099">
    <property type="entry name" value="MutL/Mlh/PMS"/>
</dbReference>
<dbReference type="InterPro" id="IPR038973">
    <property type="entry name" value="MutL/Mlh/Pms-like"/>
</dbReference>
<dbReference type="InterPro" id="IPR014790">
    <property type="entry name" value="MutL_C"/>
</dbReference>
<dbReference type="InterPro" id="IPR042120">
    <property type="entry name" value="MutL_C_dimsub"/>
</dbReference>
<dbReference type="InterPro" id="IPR042121">
    <property type="entry name" value="MutL_C_regsub"/>
</dbReference>
<dbReference type="InterPro" id="IPR037198">
    <property type="entry name" value="MutL_C_sf"/>
</dbReference>
<dbReference type="InterPro" id="IPR020568">
    <property type="entry name" value="Ribosomal_Su5_D2-typ_SF"/>
</dbReference>
<dbReference type="InterPro" id="IPR014721">
    <property type="entry name" value="Ribsml_uS5_D2-typ_fold_subgr"/>
</dbReference>
<dbReference type="NCBIfam" id="TIGR00585">
    <property type="entry name" value="mutl"/>
    <property type="match status" value="1"/>
</dbReference>
<dbReference type="NCBIfam" id="NF000950">
    <property type="entry name" value="PRK00095.1-3"/>
    <property type="match status" value="1"/>
</dbReference>
<dbReference type="PANTHER" id="PTHR10073">
    <property type="entry name" value="DNA MISMATCH REPAIR PROTEIN MLH, PMS, MUTL"/>
    <property type="match status" value="1"/>
</dbReference>
<dbReference type="PANTHER" id="PTHR10073:SF12">
    <property type="entry name" value="DNA MISMATCH REPAIR PROTEIN MLH1"/>
    <property type="match status" value="1"/>
</dbReference>
<dbReference type="Pfam" id="PF01119">
    <property type="entry name" value="DNA_mis_repair"/>
    <property type="match status" value="1"/>
</dbReference>
<dbReference type="Pfam" id="PF13589">
    <property type="entry name" value="HATPase_c_3"/>
    <property type="match status" value="1"/>
</dbReference>
<dbReference type="Pfam" id="PF08676">
    <property type="entry name" value="MutL_C"/>
    <property type="match status" value="1"/>
</dbReference>
<dbReference type="SMART" id="SM01340">
    <property type="entry name" value="DNA_mis_repair"/>
    <property type="match status" value="1"/>
</dbReference>
<dbReference type="SMART" id="SM00853">
    <property type="entry name" value="MutL_C"/>
    <property type="match status" value="1"/>
</dbReference>
<dbReference type="SUPFAM" id="SSF55874">
    <property type="entry name" value="ATPase domain of HSP90 chaperone/DNA topoisomerase II/histidine kinase"/>
    <property type="match status" value="1"/>
</dbReference>
<dbReference type="SUPFAM" id="SSF118116">
    <property type="entry name" value="DNA mismatch repair protein MutL"/>
    <property type="match status" value="1"/>
</dbReference>
<dbReference type="SUPFAM" id="SSF54211">
    <property type="entry name" value="Ribosomal protein S5 domain 2-like"/>
    <property type="match status" value="1"/>
</dbReference>
<dbReference type="PROSITE" id="PS00058">
    <property type="entry name" value="DNA_MISMATCH_REPAIR_1"/>
    <property type="match status" value="1"/>
</dbReference>
<protein>
    <recommendedName>
        <fullName evidence="1">DNA mismatch repair protein MutL</fullName>
    </recommendedName>
</protein>
<gene>
    <name evidence="1" type="primary">mutL</name>
    <name type="ordered locus">USA300HOU_1228</name>
</gene>